<evidence type="ECO:0000255" key="1">
    <source>
        <dbReference type="HAMAP-Rule" id="MF_00146"/>
    </source>
</evidence>
<sequence>MLLSDRDITAELDAGRVALDPYDPGMLQPASIDVRIDRFFRLFDNHKYPYIDPAEDQPELTRLIESKPGEPFILHPGEFVLGSTFELVTLPDDVAARLEGKSSLGRLGLLTHSTAGFIDPGFSGHVTLELSNVATLPIKLWPGMKIGQLCFFRLSSPAKKPYGSGEYASRYQGQRGPTASRSHLNFVHTDVTVTDAGQQGE</sequence>
<accession>A5CV47</accession>
<proteinExistence type="inferred from homology"/>
<gene>
    <name evidence="1" type="primary">dcd</name>
    <name type="ordered locus">CMM_2900</name>
</gene>
<name>DCDB_CLAM3</name>
<protein>
    <recommendedName>
        <fullName evidence="1">dCTP deaminase, dUMP-forming</fullName>
        <ecNumber evidence="1">3.5.4.30</ecNumber>
    </recommendedName>
    <alternativeName>
        <fullName evidence="1">Bifunctional dCTP deaminase:dUTPase</fullName>
    </alternativeName>
    <alternativeName>
        <fullName evidence="1">DCD-DUT</fullName>
    </alternativeName>
</protein>
<organism>
    <name type="scientific">Clavibacter michiganensis subsp. michiganensis (strain NCPPB 382)</name>
    <dbReference type="NCBI Taxonomy" id="443906"/>
    <lineage>
        <taxon>Bacteria</taxon>
        <taxon>Bacillati</taxon>
        <taxon>Actinomycetota</taxon>
        <taxon>Actinomycetes</taxon>
        <taxon>Micrococcales</taxon>
        <taxon>Microbacteriaceae</taxon>
        <taxon>Clavibacter</taxon>
    </lineage>
</organism>
<comment type="function">
    <text evidence="1">Bifunctional enzyme that catalyzes both the deamination of dCTP to dUTP and the hydrolysis of dUTP to dUMP without releasing the toxic dUTP intermediate.</text>
</comment>
<comment type="catalytic activity">
    <reaction evidence="1">
        <text>dCTP + 2 H2O = dUMP + NH4(+) + diphosphate</text>
        <dbReference type="Rhea" id="RHEA:19205"/>
        <dbReference type="ChEBI" id="CHEBI:15377"/>
        <dbReference type="ChEBI" id="CHEBI:28938"/>
        <dbReference type="ChEBI" id="CHEBI:33019"/>
        <dbReference type="ChEBI" id="CHEBI:61481"/>
        <dbReference type="ChEBI" id="CHEBI:246422"/>
        <dbReference type="EC" id="3.5.4.30"/>
    </reaction>
</comment>
<comment type="pathway">
    <text evidence="1">Pyrimidine metabolism; dUMP biosynthesis; dUMP from dCTP: step 1/1.</text>
</comment>
<comment type="subunit">
    <text evidence="1">Homotrimer.</text>
</comment>
<comment type="similarity">
    <text evidence="1">Belongs to the dCTP deaminase family.</text>
</comment>
<reference key="1">
    <citation type="journal article" date="2008" name="J. Bacteriol.">
        <title>The genome sequence of the tomato-pathogenic actinomycete Clavibacter michiganensis subsp. michiganensis NCPPB382 reveals a large island involved in pathogenicity.</title>
        <authorList>
            <person name="Gartemann K.-H."/>
            <person name="Abt B."/>
            <person name="Bekel T."/>
            <person name="Burger A."/>
            <person name="Engemann J."/>
            <person name="Fluegel M."/>
            <person name="Gaigalat L."/>
            <person name="Goesmann A."/>
            <person name="Graefen I."/>
            <person name="Kalinowski J."/>
            <person name="Kaup O."/>
            <person name="Kirchner O."/>
            <person name="Krause L."/>
            <person name="Linke B."/>
            <person name="McHardy A."/>
            <person name="Meyer F."/>
            <person name="Pohle S."/>
            <person name="Rueckert C."/>
            <person name="Schneiker S."/>
            <person name="Zellermann E.-M."/>
            <person name="Puehler A."/>
            <person name="Eichenlaub R."/>
            <person name="Kaiser O."/>
            <person name="Bartels D."/>
        </authorList>
    </citation>
    <scope>NUCLEOTIDE SEQUENCE [LARGE SCALE GENOMIC DNA]</scope>
    <source>
        <strain>NCPPB 382</strain>
    </source>
</reference>
<feature type="chain" id="PRO_1000009708" description="dCTP deaminase, dUMP-forming">
    <location>
        <begin position="1"/>
        <end position="201"/>
    </location>
</feature>
<feature type="active site" description="Proton donor/acceptor" evidence="1">
    <location>
        <position position="129"/>
    </location>
</feature>
<feature type="binding site" evidence="1">
    <location>
        <begin position="101"/>
        <end position="106"/>
    </location>
    <ligand>
        <name>dCTP</name>
        <dbReference type="ChEBI" id="CHEBI:61481"/>
    </ligand>
</feature>
<feature type="binding site" evidence="1">
    <location>
        <position position="119"/>
    </location>
    <ligand>
        <name>dCTP</name>
        <dbReference type="ChEBI" id="CHEBI:61481"/>
    </ligand>
</feature>
<feature type="binding site" evidence="1">
    <location>
        <begin position="127"/>
        <end position="129"/>
    </location>
    <ligand>
        <name>dCTP</name>
        <dbReference type="ChEBI" id="CHEBI:61481"/>
    </ligand>
</feature>
<feature type="binding site" evidence="1">
    <location>
        <position position="148"/>
    </location>
    <ligand>
        <name>dCTP</name>
        <dbReference type="ChEBI" id="CHEBI:61481"/>
    </ligand>
</feature>
<feature type="binding site" evidence="1">
    <location>
        <position position="162"/>
    </location>
    <ligand>
        <name>dCTP</name>
        <dbReference type="ChEBI" id="CHEBI:61481"/>
    </ligand>
</feature>
<feature type="binding site" evidence="1">
    <location>
        <position position="174"/>
    </location>
    <ligand>
        <name>dCTP</name>
        <dbReference type="ChEBI" id="CHEBI:61481"/>
    </ligand>
</feature>
<feature type="site" description="Important for bifunctional activity" evidence="1">
    <location>
        <begin position="116"/>
        <end position="117"/>
    </location>
</feature>
<keyword id="KW-0378">Hydrolase</keyword>
<keyword id="KW-0546">Nucleotide metabolism</keyword>
<keyword id="KW-0547">Nucleotide-binding</keyword>
<dbReference type="EC" id="3.5.4.30" evidence="1"/>
<dbReference type="EMBL" id="AM711867">
    <property type="protein sequence ID" value="CAN02986.1"/>
    <property type="molecule type" value="Genomic_DNA"/>
</dbReference>
<dbReference type="RefSeq" id="WP_012039588.1">
    <property type="nucleotide sequence ID" value="NC_009480.1"/>
</dbReference>
<dbReference type="SMR" id="A5CV47"/>
<dbReference type="KEGG" id="cmi:CMM_2900"/>
<dbReference type="eggNOG" id="COG0717">
    <property type="taxonomic scope" value="Bacteria"/>
</dbReference>
<dbReference type="HOGENOM" id="CLU_087476_2_0_11"/>
<dbReference type="OrthoDB" id="9780956at2"/>
<dbReference type="UniPathway" id="UPA00610">
    <property type="reaction ID" value="UER00667"/>
</dbReference>
<dbReference type="Proteomes" id="UP000001564">
    <property type="component" value="Chromosome"/>
</dbReference>
<dbReference type="GO" id="GO:0033973">
    <property type="term" value="F:dCTP deaminase (dUMP-forming) activity"/>
    <property type="evidence" value="ECO:0007669"/>
    <property type="project" value="UniProtKB-UniRule"/>
</dbReference>
<dbReference type="GO" id="GO:0008829">
    <property type="term" value="F:dCTP deaminase activity"/>
    <property type="evidence" value="ECO:0007669"/>
    <property type="project" value="InterPro"/>
</dbReference>
<dbReference type="GO" id="GO:0000166">
    <property type="term" value="F:nucleotide binding"/>
    <property type="evidence" value="ECO:0007669"/>
    <property type="project" value="UniProtKB-KW"/>
</dbReference>
<dbReference type="GO" id="GO:0006226">
    <property type="term" value="P:dUMP biosynthetic process"/>
    <property type="evidence" value="ECO:0007669"/>
    <property type="project" value="UniProtKB-UniRule"/>
</dbReference>
<dbReference type="GO" id="GO:0006229">
    <property type="term" value="P:dUTP biosynthetic process"/>
    <property type="evidence" value="ECO:0007669"/>
    <property type="project" value="InterPro"/>
</dbReference>
<dbReference type="GO" id="GO:0015949">
    <property type="term" value="P:nucleobase-containing small molecule interconversion"/>
    <property type="evidence" value="ECO:0007669"/>
    <property type="project" value="TreeGrafter"/>
</dbReference>
<dbReference type="CDD" id="cd07557">
    <property type="entry name" value="trimeric_dUTPase"/>
    <property type="match status" value="1"/>
</dbReference>
<dbReference type="FunFam" id="2.70.40.10:FF:000005">
    <property type="entry name" value="dCTP deaminase, dUMP-forming"/>
    <property type="match status" value="1"/>
</dbReference>
<dbReference type="Gene3D" id="2.70.40.10">
    <property type="match status" value="1"/>
</dbReference>
<dbReference type="HAMAP" id="MF_00146">
    <property type="entry name" value="dCTP_deaminase"/>
    <property type="match status" value="1"/>
</dbReference>
<dbReference type="InterPro" id="IPR011962">
    <property type="entry name" value="dCTP_deaminase"/>
</dbReference>
<dbReference type="InterPro" id="IPR036157">
    <property type="entry name" value="dUTPase-like_sf"/>
</dbReference>
<dbReference type="InterPro" id="IPR033704">
    <property type="entry name" value="dUTPase_trimeric"/>
</dbReference>
<dbReference type="NCBIfam" id="TIGR02274">
    <property type="entry name" value="dCTP_deam"/>
    <property type="match status" value="1"/>
</dbReference>
<dbReference type="PANTHER" id="PTHR42680">
    <property type="entry name" value="DCTP DEAMINASE"/>
    <property type="match status" value="1"/>
</dbReference>
<dbReference type="PANTHER" id="PTHR42680:SF3">
    <property type="entry name" value="DCTP DEAMINASE"/>
    <property type="match status" value="1"/>
</dbReference>
<dbReference type="Pfam" id="PF22769">
    <property type="entry name" value="DCD"/>
    <property type="match status" value="1"/>
</dbReference>
<dbReference type="SUPFAM" id="SSF51283">
    <property type="entry name" value="dUTPase-like"/>
    <property type="match status" value="1"/>
</dbReference>